<reference key="1">
    <citation type="journal article" date="2002" name="Nature">
        <title>Comparison of the genomes of two Xanthomonas pathogens with differing host specificities.</title>
        <authorList>
            <person name="da Silva A.C.R."/>
            <person name="Ferro J.A."/>
            <person name="Reinach F.C."/>
            <person name="Farah C.S."/>
            <person name="Furlan L.R."/>
            <person name="Quaggio R.B."/>
            <person name="Monteiro-Vitorello C.B."/>
            <person name="Van Sluys M.A."/>
            <person name="Almeida N.F. Jr."/>
            <person name="Alves L.M.C."/>
            <person name="do Amaral A.M."/>
            <person name="Bertolini M.C."/>
            <person name="Camargo L.E.A."/>
            <person name="Camarotte G."/>
            <person name="Cannavan F."/>
            <person name="Cardozo J."/>
            <person name="Chambergo F."/>
            <person name="Ciapina L.P."/>
            <person name="Cicarelli R.M.B."/>
            <person name="Coutinho L.L."/>
            <person name="Cursino-Santos J.R."/>
            <person name="El-Dorry H."/>
            <person name="Faria J.B."/>
            <person name="Ferreira A.J.S."/>
            <person name="Ferreira R.C.C."/>
            <person name="Ferro M.I.T."/>
            <person name="Formighieri E.F."/>
            <person name="Franco M.C."/>
            <person name="Greggio C.C."/>
            <person name="Gruber A."/>
            <person name="Katsuyama A.M."/>
            <person name="Kishi L.T."/>
            <person name="Leite R.P."/>
            <person name="Lemos E.G.M."/>
            <person name="Lemos M.V.F."/>
            <person name="Locali E.C."/>
            <person name="Machado M.A."/>
            <person name="Madeira A.M.B.N."/>
            <person name="Martinez-Rossi N.M."/>
            <person name="Martins E.C."/>
            <person name="Meidanis J."/>
            <person name="Menck C.F.M."/>
            <person name="Miyaki C.Y."/>
            <person name="Moon D.H."/>
            <person name="Moreira L.M."/>
            <person name="Novo M.T.M."/>
            <person name="Okura V.K."/>
            <person name="Oliveira M.C."/>
            <person name="Oliveira V.R."/>
            <person name="Pereira H.A."/>
            <person name="Rossi A."/>
            <person name="Sena J.A.D."/>
            <person name="Silva C."/>
            <person name="de Souza R.F."/>
            <person name="Spinola L.A.F."/>
            <person name="Takita M.A."/>
            <person name="Tamura R.E."/>
            <person name="Teixeira E.C."/>
            <person name="Tezza R.I.D."/>
            <person name="Trindade dos Santos M."/>
            <person name="Truffi D."/>
            <person name="Tsai S.M."/>
            <person name="White F.F."/>
            <person name="Setubal J.C."/>
            <person name="Kitajima J.P."/>
        </authorList>
    </citation>
    <scope>NUCLEOTIDE SEQUENCE [LARGE SCALE GENOMIC DNA]</scope>
    <source>
        <strain>306</strain>
    </source>
</reference>
<gene>
    <name evidence="1" type="primary">obg</name>
    <name type="ordered locus">XAC1250</name>
</gene>
<keyword id="KW-0963">Cytoplasm</keyword>
<keyword id="KW-0342">GTP-binding</keyword>
<keyword id="KW-0378">Hydrolase</keyword>
<keyword id="KW-0460">Magnesium</keyword>
<keyword id="KW-0479">Metal-binding</keyword>
<keyword id="KW-0547">Nucleotide-binding</keyword>
<sequence length="355" mass="38181">MKLVDEAEILVTAGNGGNGCVGFRREKFIPLGGPDGGDGGAGGSVWIVADENVNTLVDFRHERTFKAQRGENGMGRQAYGKGGEDRIIVVPVGTVVINVQTDEVIGDLTQHGDRLLVAKGGKGGLGNMHFKSSVNRAPRQATTGEEGEERLLKLELKLLADVGLLGFPNAGKSTLIRAVSAATPKVADYPFTTLYPNLGVVSVEAYRSFVIADVPGLIEGAADGAGLGTQFLRHLQRTRLLLHLVDISPALGVYGEGGVDGVSPADQVRTIERELERHDPELLKKPRWLVLNKADLMFEDEARAAAETIVAELGWTAPWYLVSALGRDGTFPIMKDVMAFFDRQREDELEARNAG</sequence>
<protein>
    <recommendedName>
        <fullName evidence="1">GTPase Obg</fullName>
        <ecNumber evidence="1">3.6.5.-</ecNumber>
    </recommendedName>
    <alternativeName>
        <fullName evidence="1">GTP-binding protein Obg</fullName>
    </alternativeName>
</protein>
<evidence type="ECO:0000255" key="1">
    <source>
        <dbReference type="HAMAP-Rule" id="MF_01454"/>
    </source>
</evidence>
<evidence type="ECO:0000255" key="2">
    <source>
        <dbReference type="PROSITE-ProRule" id="PRU01231"/>
    </source>
</evidence>
<accession>Q8PN23</accession>
<name>OBG_XANAC</name>
<feature type="chain" id="PRO_0000386393" description="GTPase Obg">
    <location>
        <begin position="1"/>
        <end position="355"/>
    </location>
</feature>
<feature type="domain" description="Obg" evidence="2">
    <location>
        <begin position="1"/>
        <end position="159"/>
    </location>
</feature>
<feature type="domain" description="OBG-type G" evidence="1">
    <location>
        <begin position="160"/>
        <end position="342"/>
    </location>
</feature>
<feature type="binding site" evidence="1">
    <location>
        <begin position="166"/>
        <end position="173"/>
    </location>
    <ligand>
        <name>GTP</name>
        <dbReference type="ChEBI" id="CHEBI:37565"/>
    </ligand>
</feature>
<feature type="binding site" evidence="1">
    <location>
        <position position="173"/>
    </location>
    <ligand>
        <name>Mg(2+)</name>
        <dbReference type="ChEBI" id="CHEBI:18420"/>
    </ligand>
</feature>
<feature type="binding site" evidence="1">
    <location>
        <begin position="191"/>
        <end position="195"/>
    </location>
    <ligand>
        <name>GTP</name>
        <dbReference type="ChEBI" id="CHEBI:37565"/>
    </ligand>
</feature>
<feature type="binding site" evidence="1">
    <location>
        <position position="193"/>
    </location>
    <ligand>
        <name>Mg(2+)</name>
        <dbReference type="ChEBI" id="CHEBI:18420"/>
    </ligand>
</feature>
<feature type="binding site" evidence="1">
    <location>
        <begin position="213"/>
        <end position="216"/>
    </location>
    <ligand>
        <name>GTP</name>
        <dbReference type="ChEBI" id="CHEBI:37565"/>
    </ligand>
</feature>
<feature type="binding site" evidence="1">
    <location>
        <begin position="292"/>
        <end position="295"/>
    </location>
    <ligand>
        <name>GTP</name>
        <dbReference type="ChEBI" id="CHEBI:37565"/>
    </ligand>
</feature>
<feature type="binding site" evidence="1">
    <location>
        <begin position="323"/>
        <end position="325"/>
    </location>
    <ligand>
        <name>GTP</name>
        <dbReference type="ChEBI" id="CHEBI:37565"/>
    </ligand>
</feature>
<proteinExistence type="inferred from homology"/>
<comment type="function">
    <text evidence="1">An essential GTPase which binds GTP, GDP and possibly (p)ppGpp with moderate affinity, with high nucleotide exchange rates and a fairly low GTP hydrolysis rate. Plays a role in control of the cell cycle, stress response, ribosome biogenesis and in those bacteria that undergo differentiation, in morphogenesis control.</text>
</comment>
<comment type="cofactor">
    <cofactor evidence="1">
        <name>Mg(2+)</name>
        <dbReference type="ChEBI" id="CHEBI:18420"/>
    </cofactor>
</comment>
<comment type="subunit">
    <text evidence="1">Monomer.</text>
</comment>
<comment type="subcellular location">
    <subcellularLocation>
        <location evidence="1">Cytoplasm</location>
    </subcellularLocation>
</comment>
<comment type="similarity">
    <text evidence="1">Belongs to the TRAFAC class OBG-HflX-like GTPase superfamily. OBG GTPase family.</text>
</comment>
<dbReference type="EC" id="3.6.5.-" evidence="1"/>
<dbReference type="EMBL" id="AE008923">
    <property type="protein sequence ID" value="AAM36122.1"/>
    <property type="molecule type" value="Genomic_DNA"/>
</dbReference>
<dbReference type="SMR" id="Q8PN23"/>
<dbReference type="KEGG" id="xac:XAC1250"/>
<dbReference type="eggNOG" id="COG0536">
    <property type="taxonomic scope" value="Bacteria"/>
</dbReference>
<dbReference type="HOGENOM" id="CLU_011747_2_0_6"/>
<dbReference type="Proteomes" id="UP000000576">
    <property type="component" value="Chromosome"/>
</dbReference>
<dbReference type="GO" id="GO:0005737">
    <property type="term" value="C:cytoplasm"/>
    <property type="evidence" value="ECO:0007669"/>
    <property type="project" value="UniProtKB-SubCell"/>
</dbReference>
<dbReference type="GO" id="GO:0005525">
    <property type="term" value="F:GTP binding"/>
    <property type="evidence" value="ECO:0007669"/>
    <property type="project" value="UniProtKB-UniRule"/>
</dbReference>
<dbReference type="GO" id="GO:0003924">
    <property type="term" value="F:GTPase activity"/>
    <property type="evidence" value="ECO:0007669"/>
    <property type="project" value="UniProtKB-UniRule"/>
</dbReference>
<dbReference type="GO" id="GO:0000287">
    <property type="term" value="F:magnesium ion binding"/>
    <property type="evidence" value="ECO:0007669"/>
    <property type="project" value="InterPro"/>
</dbReference>
<dbReference type="GO" id="GO:0042254">
    <property type="term" value="P:ribosome biogenesis"/>
    <property type="evidence" value="ECO:0007669"/>
    <property type="project" value="UniProtKB-UniRule"/>
</dbReference>
<dbReference type="CDD" id="cd01898">
    <property type="entry name" value="Obg"/>
    <property type="match status" value="1"/>
</dbReference>
<dbReference type="FunFam" id="2.70.210.12:FF:000001">
    <property type="entry name" value="GTPase Obg"/>
    <property type="match status" value="1"/>
</dbReference>
<dbReference type="Gene3D" id="2.70.210.12">
    <property type="entry name" value="GTP1/OBG domain"/>
    <property type="match status" value="1"/>
</dbReference>
<dbReference type="Gene3D" id="3.40.50.300">
    <property type="entry name" value="P-loop containing nucleotide triphosphate hydrolases"/>
    <property type="match status" value="1"/>
</dbReference>
<dbReference type="HAMAP" id="MF_01454">
    <property type="entry name" value="GTPase_Obg"/>
    <property type="match status" value="1"/>
</dbReference>
<dbReference type="InterPro" id="IPR031167">
    <property type="entry name" value="G_OBG"/>
</dbReference>
<dbReference type="InterPro" id="IPR006073">
    <property type="entry name" value="GTP-bd"/>
</dbReference>
<dbReference type="InterPro" id="IPR014100">
    <property type="entry name" value="GTP-bd_Obg/CgtA"/>
</dbReference>
<dbReference type="InterPro" id="IPR006074">
    <property type="entry name" value="GTP1-OBG_CS"/>
</dbReference>
<dbReference type="InterPro" id="IPR006169">
    <property type="entry name" value="GTP1_OBG_dom"/>
</dbReference>
<dbReference type="InterPro" id="IPR036726">
    <property type="entry name" value="GTP1_OBG_dom_sf"/>
</dbReference>
<dbReference type="InterPro" id="IPR045086">
    <property type="entry name" value="OBG_GTPase"/>
</dbReference>
<dbReference type="InterPro" id="IPR027417">
    <property type="entry name" value="P-loop_NTPase"/>
</dbReference>
<dbReference type="NCBIfam" id="TIGR02729">
    <property type="entry name" value="Obg_CgtA"/>
    <property type="match status" value="1"/>
</dbReference>
<dbReference type="NCBIfam" id="NF008955">
    <property type="entry name" value="PRK12297.1"/>
    <property type="match status" value="1"/>
</dbReference>
<dbReference type="NCBIfam" id="NF008956">
    <property type="entry name" value="PRK12299.1"/>
    <property type="match status" value="1"/>
</dbReference>
<dbReference type="PANTHER" id="PTHR11702">
    <property type="entry name" value="DEVELOPMENTALLY REGULATED GTP-BINDING PROTEIN-RELATED"/>
    <property type="match status" value="1"/>
</dbReference>
<dbReference type="PANTHER" id="PTHR11702:SF31">
    <property type="entry name" value="MITOCHONDRIAL RIBOSOME-ASSOCIATED GTPASE 2"/>
    <property type="match status" value="1"/>
</dbReference>
<dbReference type="Pfam" id="PF01018">
    <property type="entry name" value="GTP1_OBG"/>
    <property type="match status" value="1"/>
</dbReference>
<dbReference type="Pfam" id="PF01926">
    <property type="entry name" value="MMR_HSR1"/>
    <property type="match status" value="1"/>
</dbReference>
<dbReference type="PIRSF" id="PIRSF002401">
    <property type="entry name" value="GTP_bd_Obg/CgtA"/>
    <property type="match status" value="1"/>
</dbReference>
<dbReference type="PRINTS" id="PR00326">
    <property type="entry name" value="GTP1OBG"/>
</dbReference>
<dbReference type="SUPFAM" id="SSF82051">
    <property type="entry name" value="Obg GTP-binding protein N-terminal domain"/>
    <property type="match status" value="1"/>
</dbReference>
<dbReference type="SUPFAM" id="SSF52540">
    <property type="entry name" value="P-loop containing nucleoside triphosphate hydrolases"/>
    <property type="match status" value="1"/>
</dbReference>
<dbReference type="PROSITE" id="PS51710">
    <property type="entry name" value="G_OBG"/>
    <property type="match status" value="1"/>
</dbReference>
<dbReference type="PROSITE" id="PS00905">
    <property type="entry name" value="GTP1_OBG"/>
    <property type="match status" value="1"/>
</dbReference>
<dbReference type="PROSITE" id="PS51883">
    <property type="entry name" value="OBG"/>
    <property type="match status" value="1"/>
</dbReference>
<organism>
    <name type="scientific">Xanthomonas axonopodis pv. citri (strain 306)</name>
    <dbReference type="NCBI Taxonomy" id="190486"/>
    <lineage>
        <taxon>Bacteria</taxon>
        <taxon>Pseudomonadati</taxon>
        <taxon>Pseudomonadota</taxon>
        <taxon>Gammaproteobacteria</taxon>
        <taxon>Lysobacterales</taxon>
        <taxon>Lysobacteraceae</taxon>
        <taxon>Xanthomonas</taxon>
    </lineage>
</organism>